<keyword id="KW-0963">Cytoplasm</keyword>
<keyword id="KW-0489">Methyltransferase</keyword>
<keyword id="KW-0694">RNA-binding</keyword>
<keyword id="KW-0698">rRNA processing</keyword>
<keyword id="KW-0949">S-adenosyl-L-methionine</keyword>
<keyword id="KW-0808">Transferase</keyword>
<sequence length="296" mass="33494">MEYKDIATPSRTRALLDQYGFNFKKSLGQNFLIDVNIINKIIEASHIDCTTGVIEVGPGMGSLTEQLAKNAKKVMAFEIDQRLIPVLKDTLSPYDNVTIINEDILKADIAKAVDTHLQDCDKIMVVANLPYYITTPILLNLMQQDVPIDGFVVMMQKEVGERLNAQVGTKAYGSLSIVAQYYTETSKVLTVPKTVFMPPPNVDSIVVKLMQRQEPLVQVDDEEGFFKLAKAAFAQRRKTINNNYQNFFKDGKKNKETIRQWLESAGIDPKRRGETLTIQDFATLYEQKKKFSELTN</sequence>
<proteinExistence type="inferred from homology"/>
<organism>
    <name type="scientific">Staphylococcus epidermidis (strain ATCC 12228 / FDA PCI 1200)</name>
    <dbReference type="NCBI Taxonomy" id="176280"/>
    <lineage>
        <taxon>Bacteria</taxon>
        <taxon>Bacillati</taxon>
        <taxon>Bacillota</taxon>
        <taxon>Bacilli</taxon>
        <taxon>Bacillales</taxon>
        <taxon>Staphylococcaceae</taxon>
        <taxon>Staphylococcus</taxon>
    </lineage>
</organism>
<name>RSMA_STAES</name>
<protein>
    <recommendedName>
        <fullName evidence="1">Ribosomal RNA small subunit methyltransferase A</fullName>
        <ecNumber evidence="1">2.1.1.182</ecNumber>
    </recommendedName>
    <alternativeName>
        <fullName evidence="1">16S rRNA (adenine(1518)-N(6)/adenine(1519)-N(6))-dimethyltransferase</fullName>
    </alternativeName>
    <alternativeName>
        <fullName evidence="1">16S rRNA dimethyladenosine transferase</fullName>
    </alternativeName>
    <alternativeName>
        <fullName evidence="1">16S rRNA dimethylase</fullName>
    </alternativeName>
    <alternativeName>
        <fullName evidence="1">S-adenosylmethionine-6-N', N'-adenosyl(rRNA) dimethyltransferase</fullName>
    </alternativeName>
</protein>
<feature type="chain" id="PRO_0000101609" description="Ribosomal RNA small subunit methyltransferase A">
    <location>
        <begin position="1"/>
        <end position="296"/>
    </location>
</feature>
<feature type="binding site" evidence="1">
    <location>
        <position position="30"/>
    </location>
    <ligand>
        <name>S-adenosyl-L-methionine</name>
        <dbReference type="ChEBI" id="CHEBI:59789"/>
    </ligand>
</feature>
<feature type="binding site" evidence="1">
    <location>
        <position position="32"/>
    </location>
    <ligand>
        <name>S-adenosyl-L-methionine</name>
        <dbReference type="ChEBI" id="CHEBI:59789"/>
    </ligand>
</feature>
<feature type="binding site" evidence="1">
    <location>
        <position position="57"/>
    </location>
    <ligand>
        <name>S-adenosyl-L-methionine</name>
        <dbReference type="ChEBI" id="CHEBI:59789"/>
    </ligand>
</feature>
<feature type="binding site" evidence="1">
    <location>
        <position position="78"/>
    </location>
    <ligand>
        <name>S-adenosyl-L-methionine</name>
        <dbReference type="ChEBI" id="CHEBI:59789"/>
    </ligand>
</feature>
<feature type="binding site" evidence="1">
    <location>
        <position position="103"/>
    </location>
    <ligand>
        <name>S-adenosyl-L-methionine</name>
        <dbReference type="ChEBI" id="CHEBI:59789"/>
    </ligand>
</feature>
<feature type="binding site" evidence="1">
    <location>
        <position position="128"/>
    </location>
    <ligand>
        <name>S-adenosyl-L-methionine</name>
        <dbReference type="ChEBI" id="CHEBI:59789"/>
    </ligand>
</feature>
<accession>Q8CQU5</accession>
<dbReference type="EC" id="2.1.1.182" evidence="1"/>
<dbReference type="EMBL" id="AE015929">
    <property type="protein sequence ID" value="AAO05932.1"/>
    <property type="molecule type" value="Genomic_DNA"/>
</dbReference>
<dbReference type="RefSeq" id="NP_765845.1">
    <property type="nucleotide sequence ID" value="NC_004461.1"/>
</dbReference>
<dbReference type="RefSeq" id="WP_001832224.1">
    <property type="nucleotide sequence ID" value="NZ_WBME01000023.1"/>
</dbReference>
<dbReference type="SMR" id="Q8CQU5"/>
<dbReference type="GeneID" id="50019596"/>
<dbReference type="KEGG" id="sep:SE_2290"/>
<dbReference type="PATRIC" id="fig|176280.10.peg.2233"/>
<dbReference type="eggNOG" id="COG0030">
    <property type="taxonomic scope" value="Bacteria"/>
</dbReference>
<dbReference type="HOGENOM" id="CLU_041220_0_0_9"/>
<dbReference type="OrthoDB" id="9814755at2"/>
<dbReference type="Proteomes" id="UP000001411">
    <property type="component" value="Chromosome"/>
</dbReference>
<dbReference type="GO" id="GO:0005829">
    <property type="term" value="C:cytosol"/>
    <property type="evidence" value="ECO:0007669"/>
    <property type="project" value="TreeGrafter"/>
</dbReference>
<dbReference type="GO" id="GO:0052908">
    <property type="term" value="F:16S rRNA (adenine(1518)-N(6)/adenine(1519)-N(6))-dimethyltransferase activity"/>
    <property type="evidence" value="ECO:0007669"/>
    <property type="project" value="UniProtKB-EC"/>
</dbReference>
<dbReference type="GO" id="GO:0003723">
    <property type="term" value="F:RNA binding"/>
    <property type="evidence" value="ECO:0007669"/>
    <property type="project" value="UniProtKB-KW"/>
</dbReference>
<dbReference type="CDD" id="cd02440">
    <property type="entry name" value="AdoMet_MTases"/>
    <property type="match status" value="1"/>
</dbReference>
<dbReference type="FunFam" id="1.10.8.100:FF:000002">
    <property type="entry name" value="Ribosomal RNA small subunit methyltransferase A"/>
    <property type="match status" value="1"/>
</dbReference>
<dbReference type="FunFam" id="3.40.50.150:FF:000023">
    <property type="entry name" value="Ribosomal RNA small subunit methyltransferase A"/>
    <property type="match status" value="1"/>
</dbReference>
<dbReference type="Gene3D" id="1.10.8.100">
    <property type="entry name" value="Ribosomal RNA adenine dimethylase-like, domain 2"/>
    <property type="match status" value="1"/>
</dbReference>
<dbReference type="Gene3D" id="3.40.50.150">
    <property type="entry name" value="Vaccinia Virus protein VP39"/>
    <property type="match status" value="1"/>
</dbReference>
<dbReference type="HAMAP" id="MF_00607">
    <property type="entry name" value="16SrRNA_methyltr_A"/>
    <property type="match status" value="1"/>
</dbReference>
<dbReference type="InterPro" id="IPR001737">
    <property type="entry name" value="KsgA/Erm"/>
</dbReference>
<dbReference type="InterPro" id="IPR023165">
    <property type="entry name" value="rRNA_Ade_diMease-like_C"/>
</dbReference>
<dbReference type="InterPro" id="IPR020596">
    <property type="entry name" value="rRNA_Ade_Mease_Trfase_CS"/>
</dbReference>
<dbReference type="InterPro" id="IPR020598">
    <property type="entry name" value="rRNA_Ade_methylase_Trfase_N"/>
</dbReference>
<dbReference type="InterPro" id="IPR011530">
    <property type="entry name" value="rRNA_adenine_dimethylase"/>
</dbReference>
<dbReference type="InterPro" id="IPR029063">
    <property type="entry name" value="SAM-dependent_MTases_sf"/>
</dbReference>
<dbReference type="NCBIfam" id="TIGR00755">
    <property type="entry name" value="ksgA"/>
    <property type="match status" value="1"/>
</dbReference>
<dbReference type="PANTHER" id="PTHR11727">
    <property type="entry name" value="DIMETHYLADENOSINE TRANSFERASE"/>
    <property type="match status" value="1"/>
</dbReference>
<dbReference type="PANTHER" id="PTHR11727:SF7">
    <property type="entry name" value="DIMETHYLADENOSINE TRANSFERASE-RELATED"/>
    <property type="match status" value="1"/>
</dbReference>
<dbReference type="Pfam" id="PF00398">
    <property type="entry name" value="RrnaAD"/>
    <property type="match status" value="1"/>
</dbReference>
<dbReference type="SMART" id="SM00650">
    <property type="entry name" value="rADc"/>
    <property type="match status" value="1"/>
</dbReference>
<dbReference type="SUPFAM" id="SSF53335">
    <property type="entry name" value="S-adenosyl-L-methionine-dependent methyltransferases"/>
    <property type="match status" value="1"/>
</dbReference>
<dbReference type="PROSITE" id="PS01131">
    <property type="entry name" value="RRNA_A_DIMETH"/>
    <property type="match status" value="1"/>
</dbReference>
<dbReference type="PROSITE" id="PS51689">
    <property type="entry name" value="SAM_RNA_A_N6_MT"/>
    <property type="match status" value="1"/>
</dbReference>
<comment type="function">
    <text evidence="1">Specifically dimethylates two adjacent adenosines (A1518 and A1519) in the loop of a conserved hairpin near the 3'-end of 16S rRNA in the 30S particle. May play a critical role in biogenesis of 30S subunits.</text>
</comment>
<comment type="catalytic activity">
    <reaction evidence="1">
        <text>adenosine(1518)/adenosine(1519) in 16S rRNA + 4 S-adenosyl-L-methionine = N(6)-dimethyladenosine(1518)/N(6)-dimethyladenosine(1519) in 16S rRNA + 4 S-adenosyl-L-homocysteine + 4 H(+)</text>
        <dbReference type="Rhea" id="RHEA:19609"/>
        <dbReference type="Rhea" id="RHEA-COMP:10232"/>
        <dbReference type="Rhea" id="RHEA-COMP:10233"/>
        <dbReference type="ChEBI" id="CHEBI:15378"/>
        <dbReference type="ChEBI" id="CHEBI:57856"/>
        <dbReference type="ChEBI" id="CHEBI:59789"/>
        <dbReference type="ChEBI" id="CHEBI:74411"/>
        <dbReference type="ChEBI" id="CHEBI:74493"/>
        <dbReference type="EC" id="2.1.1.182"/>
    </reaction>
</comment>
<comment type="subcellular location">
    <subcellularLocation>
        <location evidence="1">Cytoplasm</location>
    </subcellularLocation>
</comment>
<comment type="similarity">
    <text evidence="1">Belongs to the class I-like SAM-binding methyltransferase superfamily. rRNA adenine N(6)-methyltransferase family. RsmA subfamily.</text>
</comment>
<gene>
    <name evidence="1" type="primary">rsmA</name>
    <name evidence="1" type="synonym">ksgA</name>
    <name type="ordered locus">SE_2290</name>
</gene>
<reference key="1">
    <citation type="journal article" date="2003" name="Mol. Microbiol.">
        <title>Genome-based analysis of virulence genes in a non-biofilm-forming Staphylococcus epidermidis strain (ATCC 12228).</title>
        <authorList>
            <person name="Zhang Y.-Q."/>
            <person name="Ren S.-X."/>
            <person name="Li H.-L."/>
            <person name="Wang Y.-X."/>
            <person name="Fu G."/>
            <person name="Yang J."/>
            <person name="Qin Z.-Q."/>
            <person name="Miao Y.-G."/>
            <person name="Wang W.-Y."/>
            <person name="Chen R.-S."/>
            <person name="Shen Y."/>
            <person name="Chen Z."/>
            <person name="Yuan Z.-H."/>
            <person name="Zhao G.-P."/>
            <person name="Qu D."/>
            <person name="Danchin A."/>
            <person name="Wen Y.-M."/>
        </authorList>
    </citation>
    <scope>NUCLEOTIDE SEQUENCE [LARGE SCALE GENOMIC DNA]</scope>
    <source>
        <strain>ATCC 12228 / FDA PCI 1200</strain>
    </source>
</reference>
<evidence type="ECO:0000255" key="1">
    <source>
        <dbReference type="HAMAP-Rule" id="MF_00607"/>
    </source>
</evidence>